<organism>
    <name type="scientific">Enterobacteria phage T4</name>
    <name type="common">Bacteriophage T4</name>
    <dbReference type="NCBI Taxonomy" id="10665"/>
    <lineage>
        <taxon>Viruses</taxon>
        <taxon>Duplodnaviria</taxon>
        <taxon>Heunggongvirae</taxon>
        <taxon>Uroviricota</taxon>
        <taxon>Caudoviricetes</taxon>
        <taxon>Straboviridae</taxon>
        <taxon>Tevenvirinae</taxon>
        <taxon>Tequatrovirus</taxon>
    </lineage>
</organism>
<keyword id="KW-0378">Hydrolase</keyword>
<keyword id="KW-1185">Reference proteome</keyword>
<sequence length="171" mass="20424">MAHFNECAHLIEGVDKAQNEYWDILGDEKDPLQVMLDMQRFLQIRLANVREYCYHPDKLETAGDVVSWMREQKDCIDDEFRELLTSLGEMSRGEKEASAVWKKWKARYIEAQEKRIDEMSPEDQLEIKFELVDIFHFVLNMFVGLGMNAEEIFKLYYLKNKHNFERQDNGY</sequence>
<proteinExistence type="predicted"/>
<gene>
    <name type="primary">56</name>
</gene>
<dbReference type="EC" id="3.6.1.12"/>
<dbReference type="EMBL" id="M30001">
    <property type="protein sequence ID" value="AAB07791.1"/>
    <property type="molecule type" value="Genomic_DNA"/>
</dbReference>
<dbReference type="EMBL" id="AF158101">
    <property type="protein sequence ID" value="AAD42499.1"/>
    <property type="molecule type" value="Genomic_DNA"/>
</dbReference>
<dbReference type="PIR" id="T10132">
    <property type="entry name" value="T10132"/>
</dbReference>
<dbReference type="RefSeq" id="NP_049646.1">
    <property type="nucleotide sequence ID" value="NC_000866.4"/>
</dbReference>
<dbReference type="SMR" id="P39262"/>
<dbReference type="GeneID" id="1258544"/>
<dbReference type="KEGG" id="vg:1258544"/>
<dbReference type="OrthoDB" id="9623at10239"/>
<dbReference type="Proteomes" id="UP000009087">
    <property type="component" value="Segment"/>
</dbReference>
<dbReference type="GO" id="GO:0047840">
    <property type="term" value="F:dCTP diphosphatase activity"/>
    <property type="evidence" value="ECO:0007669"/>
    <property type="project" value="UniProtKB-EC"/>
</dbReference>
<dbReference type="Gene3D" id="1.10.4010.10">
    <property type="entry name" value="Type II deoxyuridine triphosphatase"/>
    <property type="match status" value="1"/>
</dbReference>
<dbReference type="InterPro" id="IPR014871">
    <property type="entry name" value="dUTPase/dCTP_pyrophosphatase"/>
</dbReference>
<dbReference type="Pfam" id="PF08761">
    <property type="entry name" value="dUTPase_2"/>
    <property type="match status" value="1"/>
</dbReference>
<dbReference type="SUPFAM" id="SSF101386">
    <property type="entry name" value="all-alpha NTP pyrophosphatases"/>
    <property type="match status" value="1"/>
</dbReference>
<organismHost>
    <name type="scientific">Escherichia coli</name>
    <dbReference type="NCBI Taxonomy" id="562"/>
</organismHost>
<comment type="catalytic activity">
    <reaction>
        <text>dCTP + H2O = dCMP + diphosphate + H(+)</text>
        <dbReference type="Rhea" id="RHEA:22636"/>
        <dbReference type="ChEBI" id="CHEBI:15377"/>
        <dbReference type="ChEBI" id="CHEBI:15378"/>
        <dbReference type="ChEBI" id="CHEBI:33019"/>
        <dbReference type="ChEBI" id="CHEBI:57566"/>
        <dbReference type="ChEBI" id="CHEBI:61481"/>
        <dbReference type="EC" id="3.6.1.12"/>
    </reaction>
</comment>
<accession>P39262</accession>
<feature type="chain" id="PRO_0000165044" description="dCTP pyrophosphatase">
    <location>
        <begin position="1"/>
        <end position="171"/>
    </location>
</feature>
<protein>
    <recommendedName>
        <fullName>dCTP pyrophosphatase</fullName>
        <shortName>dCTPase</shortName>
        <ecNumber>3.6.1.12</ecNumber>
    </recommendedName>
    <alternativeName>
        <fullName>Deoxycytidine-triphosphatase</fullName>
    </alternativeName>
</protein>
<name>VG56_BPT4</name>
<reference key="1">
    <citation type="journal article" date="1990" name="Gene">
        <title>The bacteriophage T4 gene mrh whose product inhibits late T4 gene expression in an Escherichia coli rpoH (sigma 32) mutant.</title>
        <authorList>
            <person name="Frazier M.W."/>
            <person name="Mosig G."/>
        </authorList>
    </citation>
    <scope>NUCLEOTIDE SEQUENCE [GENOMIC DNA]</scope>
</reference>
<reference key="2">
    <citation type="journal article" date="2003" name="Microbiol. Mol. Biol. Rev.">
        <title>Bacteriophage T4 genome.</title>
        <authorList>
            <person name="Miller E.S."/>
            <person name="Kutter E."/>
            <person name="Mosig G."/>
            <person name="Arisaka F."/>
            <person name="Kunisawa T."/>
            <person name="Ruger W."/>
        </authorList>
    </citation>
    <scope>NUCLEOTIDE SEQUENCE [LARGE SCALE GENOMIC DNA]</scope>
</reference>